<feature type="chain" id="PRO_0000056646" description="RasGAP-activating-like protein 1">
    <location>
        <begin position="1"/>
        <end position="799"/>
    </location>
</feature>
<feature type="domain" description="C2 1" evidence="2">
    <location>
        <begin position="1"/>
        <end position="105"/>
    </location>
</feature>
<feature type="domain" description="C2 2" evidence="2">
    <location>
        <begin position="116"/>
        <end position="231"/>
    </location>
</feature>
<feature type="domain" description="Ras-GAP" evidence="4">
    <location>
        <begin position="316"/>
        <end position="544"/>
    </location>
</feature>
<feature type="domain" description="PH" evidence="3">
    <location>
        <begin position="565"/>
        <end position="672"/>
    </location>
</feature>
<feature type="zinc finger region" description="Btk-type" evidence="5">
    <location>
        <begin position="674"/>
        <end position="710"/>
    </location>
</feature>
<feature type="binding site" evidence="2">
    <location>
        <position position="21"/>
    </location>
    <ligand>
        <name>Ca(2+)</name>
        <dbReference type="ChEBI" id="CHEBI:29108"/>
        <label>1</label>
    </ligand>
</feature>
<feature type="binding site" evidence="2">
    <location>
        <position position="21"/>
    </location>
    <ligand>
        <name>Ca(2+)</name>
        <dbReference type="ChEBI" id="CHEBI:29108"/>
        <label>2</label>
    </ligand>
</feature>
<feature type="binding site" evidence="2">
    <location>
        <position position="27"/>
    </location>
    <ligand>
        <name>Ca(2+)</name>
        <dbReference type="ChEBI" id="CHEBI:29108"/>
        <label>1</label>
    </ligand>
</feature>
<feature type="binding site" evidence="2">
    <location>
        <position position="74"/>
    </location>
    <ligand>
        <name>Ca(2+)</name>
        <dbReference type="ChEBI" id="CHEBI:29108"/>
        <label>1</label>
    </ligand>
</feature>
<feature type="binding site" evidence="2">
    <location>
        <position position="74"/>
    </location>
    <ligand>
        <name>Ca(2+)</name>
        <dbReference type="ChEBI" id="CHEBI:29108"/>
        <label>2</label>
    </ligand>
</feature>
<feature type="binding site" evidence="2">
    <location>
        <position position="76"/>
    </location>
    <ligand>
        <name>Ca(2+)</name>
        <dbReference type="ChEBI" id="CHEBI:29108"/>
        <label>1</label>
    </ligand>
</feature>
<feature type="binding site" evidence="2">
    <location>
        <position position="76"/>
    </location>
    <ligand>
        <name>Ca(2+)</name>
        <dbReference type="ChEBI" id="CHEBI:29108"/>
        <label>2</label>
    </ligand>
</feature>
<feature type="binding site" evidence="2">
    <location>
        <position position="82"/>
    </location>
    <ligand>
        <name>Ca(2+)</name>
        <dbReference type="ChEBI" id="CHEBI:29108"/>
        <label>2</label>
    </ligand>
</feature>
<feature type="binding site" evidence="2">
    <location>
        <position position="149"/>
    </location>
    <ligand>
        <name>Ca(2+)</name>
        <dbReference type="ChEBI" id="CHEBI:29108"/>
        <label>3</label>
    </ligand>
</feature>
<feature type="binding site" evidence="2">
    <location>
        <position position="149"/>
    </location>
    <ligand>
        <name>Ca(2+)</name>
        <dbReference type="ChEBI" id="CHEBI:29108"/>
        <label>4</label>
    </ligand>
</feature>
<feature type="binding site" evidence="2">
    <location>
        <position position="155"/>
    </location>
    <ligand>
        <name>Ca(2+)</name>
        <dbReference type="ChEBI" id="CHEBI:29108"/>
        <label>3</label>
    </ligand>
</feature>
<feature type="binding site" evidence="2">
    <location>
        <position position="202"/>
    </location>
    <ligand>
        <name>Ca(2+)</name>
        <dbReference type="ChEBI" id="CHEBI:29108"/>
        <label>3</label>
    </ligand>
</feature>
<feature type="binding site" evidence="2">
    <location>
        <position position="202"/>
    </location>
    <ligand>
        <name>Ca(2+)</name>
        <dbReference type="ChEBI" id="CHEBI:29108"/>
        <label>4</label>
    </ligand>
</feature>
<feature type="binding site" evidence="2">
    <location>
        <position position="204"/>
    </location>
    <ligand>
        <name>Ca(2+)</name>
        <dbReference type="ChEBI" id="CHEBI:29108"/>
        <label>3</label>
    </ligand>
</feature>
<feature type="binding site" evidence="2">
    <location>
        <position position="204"/>
    </location>
    <ligand>
        <name>Ca(2+)</name>
        <dbReference type="ChEBI" id="CHEBI:29108"/>
        <label>4</label>
    </ligand>
</feature>
<feature type="binding site" evidence="2">
    <location>
        <position position="210"/>
    </location>
    <ligand>
        <name>Ca(2+)</name>
        <dbReference type="ChEBI" id="CHEBI:29108"/>
        <label>4</label>
    </ligand>
</feature>
<feature type="binding site" evidence="5">
    <location>
        <position position="682"/>
    </location>
    <ligand>
        <name>Zn(2+)</name>
        <dbReference type="ChEBI" id="CHEBI:29105"/>
    </ligand>
</feature>
<feature type="binding site" evidence="5">
    <location>
        <position position="693"/>
    </location>
    <ligand>
        <name>Zn(2+)</name>
        <dbReference type="ChEBI" id="CHEBI:29105"/>
    </ligand>
</feature>
<feature type="binding site" evidence="5">
    <location>
        <position position="694"/>
    </location>
    <ligand>
        <name>Zn(2+)</name>
        <dbReference type="ChEBI" id="CHEBI:29105"/>
    </ligand>
</feature>
<feature type="binding site" evidence="5">
    <location>
        <position position="704"/>
    </location>
    <ligand>
        <name>Zn(2+)</name>
        <dbReference type="ChEBI" id="CHEBI:29105"/>
    </ligand>
</feature>
<feature type="site" description="Arginine finger; crucial for GTP hydrolysis by stabilizing the transition state" evidence="4">
    <location>
        <position position="341"/>
    </location>
</feature>
<feature type="modified residue" description="Phosphothreonine" evidence="9">
    <location>
        <position position="400"/>
    </location>
</feature>
<feature type="sequence conflict" description="In Ref. 1; AAD09007." evidence="7" ref="1">
    <original>L</original>
    <variation>F</variation>
    <location>
        <position position="660"/>
    </location>
</feature>
<protein>
    <recommendedName>
        <fullName evidence="7">RasGAP-activating-like protein 1</fullName>
    </recommendedName>
    <alternativeName>
        <fullName evidence="8">RAS protein activator like 1</fullName>
    </alternativeName>
    <alternativeName>
        <fullName evidence="6">Ras GTPase-activating-like protein</fullName>
    </alternativeName>
</protein>
<gene>
    <name evidence="8" type="primary">Rasal1</name>
    <name evidence="6" type="synonym">Rasal</name>
</gene>
<evidence type="ECO:0000250" key="1">
    <source>
        <dbReference type="UniProtKB" id="O95294"/>
    </source>
</evidence>
<evidence type="ECO:0000255" key="2">
    <source>
        <dbReference type="PROSITE-ProRule" id="PRU00041"/>
    </source>
</evidence>
<evidence type="ECO:0000255" key="3">
    <source>
        <dbReference type="PROSITE-ProRule" id="PRU00145"/>
    </source>
</evidence>
<evidence type="ECO:0000255" key="4">
    <source>
        <dbReference type="PROSITE-ProRule" id="PRU00167"/>
    </source>
</evidence>
<evidence type="ECO:0000255" key="5">
    <source>
        <dbReference type="PROSITE-ProRule" id="PRU00432"/>
    </source>
</evidence>
<evidence type="ECO:0000303" key="6">
    <source>
    </source>
</evidence>
<evidence type="ECO:0000305" key="7"/>
<evidence type="ECO:0000312" key="8">
    <source>
        <dbReference type="MGI" id="MGI:1330842"/>
    </source>
</evidence>
<evidence type="ECO:0007744" key="9">
    <source>
    </source>
</evidence>
<organism>
    <name type="scientific">Mus musculus</name>
    <name type="common">Mouse</name>
    <dbReference type="NCBI Taxonomy" id="10090"/>
    <lineage>
        <taxon>Eukaryota</taxon>
        <taxon>Metazoa</taxon>
        <taxon>Chordata</taxon>
        <taxon>Craniata</taxon>
        <taxon>Vertebrata</taxon>
        <taxon>Euteleostomi</taxon>
        <taxon>Mammalia</taxon>
        <taxon>Eutheria</taxon>
        <taxon>Euarchontoglires</taxon>
        <taxon>Glires</taxon>
        <taxon>Rodentia</taxon>
        <taxon>Myomorpha</taxon>
        <taxon>Muroidea</taxon>
        <taxon>Muridae</taxon>
        <taxon>Murinae</taxon>
        <taxon>Mus</taxon>
        <taxon>Mus</taxon>
    </lineage>
</organism>
<dbReference type="EMBL" id="AF086714">
    <property type="protein sequence ID" value="AAD09007.1"/>
    <property type="molecule type" value="mRNA"/>
</dbReference>
<dbReference type="EMBL" id="BC005418">
    <property type="protein sequence ID" value="AAH05418.1"/>
    <property type="molecule type" value="mRNA"/>
</dbReference>
<dbReference type="EMBL" id="CH466529">
    <property type="protein sequence ID" value="EDL19757.1"/>
    <property type="molecule type" value="Genomic_DNA"/>
</dbReference>
<dbReference type="CCDS" id="CCDS19623.1"/>
<dbReference type="RefSeq" id="NP_001346073.1">
    <property type="nucleotide sequence ID" value="NM_001359144.1"/>
</dbReference>
<dbReference type="RefSeq" id="NP_038860.2">
    <property type="nucleotide sequence ID" value="NM_013832.4"/>
</dbReference>
<dbReference type="RefSeq" id="XP_006530272.1">
    <property type="nucleotide sequence ID" value="XM_006530209.3"/>
</dbReference>
<dbReference type="RefSeq" id="XP_006530273.1">
    <property type="nucleotide sequence ID" value="XM_006530210.2"/>
</dbReference>
<dbReference type="RefSeq" id="XP_030110079.1">
    <property type="nucleotide sequence ID" value="XM_030254219.1"/>
</dbReference>
<dbReference type="SMR" id="Q9Z268"/>
<dbReference type="BioGRID" id="202598">
    <property type="interactions" value="14"/>
</dbReference>
<dbReference type="FunCoup" id="Q9Z268">
    <property type="interactions" value="579"/>
</dbReference>
<dbReference type="IntAct" id="Q9Z268">
    <property type="interactions" value="6"/>
</dbReference>
<dbReference type="STRING" id="10090.ENSMUSP00000123266"/>
<dbReference type="GlyGen" id="Q9Z268">
    <property type="glycosylation" value="2 sites, 2 N-linked glycans (2 sites)"/>
</dbReference>
<dbReference type="iPTMnet" id="Q9Z268"/>
<dbReference type="PhosphoSitePlus" id="Q9Z268"/>
<dbReference type="SwissPalm" id="Q9Z268"/>
<dbReference type="PaxDb" id="10090-ENSMUSP00000031606"/>
<dbReference type="PeptideAtlas" id="Q9Z268"/>
<dbReference type="ProteomicsDB" id="254988"/>
<dbReference type="Antibodypedia" id="31222">
    <property type="antibodies" value="230 antibodies from 31 providers"/>
</dbReference>
<dbReference type="DNASU" id="19415"/>
<dbReference type="Ensembl" id="ENSMUST00000031606.10">
    <property type="protein sequence ID" value="ENSMUSP00000031606.4"/>
    <property type="gene ID" value="ENSMUSG00000029602.12"/>
</dbReference>
<dbReference type="Ensembl" id="ENSMUST00000156722.2">
    <property type="protein sequence ID" value="ENSMUSP00000123266.2"/>
    <property type="gene ID" value="ENSMUSG00000029602.12"/>
</dbReference>
<dbReference type="GeneID" id="19415"/>
<dbReference type="KEGG" id="mmu:19415"/>
<dbReference type="UCSC" id="uc008zhr.2">
    <property type="organism name" value="mouse"/>
</dbReference>
<dbReference type="AGR" id="MGI:1330842"/>
<dbReference type="CTD" id="8437"/>
<dbReference type="MGI" id="MGI:1330842">
    <property type="gene designation" value="Rasal1"/>
</dbReference>
<dbReference type="VEuPathDB" id="HostDB:ENSMUSG00000029602"/>
<dbReference type="eggNOG" id="KOG2059">
    <property type="taxonomic scope" value="Eukaryota"/>
</dbReference>
<dbReference type="GeneTree" id="ENSGT00940000158715"/>
<dbReference type="HOGENOM" id="CLU_008096_0_0_1"/>
<dbReference type="InParanoid" id="Q9Z268"/>
<dbReference type="OMA" id="MEGACTD"/>
<dbReference type="OrthoDB" id="1562946at2759"/>
<dbReference type="PhylomeDB" id="Q9Z268"/>
<dbReference type="TreeFam" id="TF105302"/>
<dbReference type="Reactome" id="R-MMU-5658442">
    <property type="pathway name" value="Regulation of RAS by GAPs"/>
</dbReference>
<dbReference type="BioGRID-ORCS" id="19415">
    <property type="hits" value="1 hit in 78 CRISPR screens"/>
</dbReference>
<dbReference type="PRO" id="PR:Q9Z268"/>
<dbReference type="Proteomes" id="UP000000589">
    <property type="component" value="Chromosome 5"/>
</dbReference>
<dbReference type="RNAct" id="Q9Z268">
    <property type="molecule type" value="protein"/>
</dbReference>
<dbReference type="Bgee" id="ENSMUSG00000029602">
    <property type="expression patterns" value="Expressed in dentate gyrus of hippocampal formation granule cell and 70 other cell types or tissues"/>
</dbReference>
<dbReference type="ExpressionAtlas" id="Q9Z268">
    <property type="expression patterns" value="baseline and differential"/>
</dbReference>
<dbReference type="GO" id="GO:0005829">
    <property type="term" value="C:cytosol"/>
    <property type="evidence" value="ECO:0007669"/>
    <property type="project" value="Ensembl"/>
</dbReference>
<dbReference type="GO" id="GO:0005886">
    <property type="term" value="C:plasma membrane"/>
    <property type="evidence" value="ECO:0007669"/>
    <property type="project" value="Ensembl"/>
</dbReference>
<dbReference type="GO" id="GO:0005096">
    <property type="term" value="F:GTPase activator activity"/>
    <property type="evidence" value="ECO:0007669"/>
    <property type="project" value="UniProtKB-KW"/>
</dbReference>
<dbReference type="GO" id="GO:0008270">
    <property type="term" value="F:zinc ion binding"/>
    <property type="evidence" value="ECO:0007669"/>
    <property type="project" value="UniProtKB-KW"/>
</dbReference>
<dbReference type="GO" id="GO:0030154">
    <property type="term" value="P:cell differentiation"/>
    <property type="evidence" value="ECO:0007669"/>
    <property type="project" value="UniProtKB-KW"/>
</dbReference>
<dbReference type="GO" id="GO:0071277">
    <property type="term" value="P:cellular response to calcium ion"/>
    <property type="evidence" value="ECO:0007669"/>
    <property type="project" value="InterPro"/>
</dbReference>
<dbReference type="GO" id="GO:0035556">
    <property type="term" value="P:intracellular signal transduction"/>
    <property type="evidence" value="ECO:0007669"/>
    <property type="project" value="InterPro"/>
</dbReference>
<dbReference type="GO" id="GO:0046580">
    <property type="term" value="P:negative regulation of Ras protein signal transduction"/>
    <property type="evidence" value="ECO:0007669"/>
    <property type="project" value="InterPro"/>
</dbReference>
<dbReference type="GO" id="GO:1903861">
    <property type="term" value="P:positive regulation of dendrite extension"/>
    <property type="evidence" value="ECO:0007669"/>
    <property type="project" value="Ensembl"/>
</dbReference>
<dbReference type="CDD" id="cd05135">
    <property type="entry name" value="RasGAP_RASAL"/>
    <property type="match status" value="1"/>
</dbReference>
<dbReference type="FunFam" id="1.10.506.10:FF:000020">
    <property type="entry name" value="Ras GTPase-activating protein 4 isoform 1"/>
    <property type="match status" value="1"/>
</dbReference>
<dbReference type="FunFam" id="2.30.29.30:FF:000283">
    <property type="entry name" value="Ras GTPase-activating protein 4 isoform 1"/>
    <property type="match status" value="1"/>
</dbReference>
<dbReference type="FunFam" id="2.60.40.150:FF:000150">
    <property type="entry name" value="RAS protein activator like 1"/>
    <property type="match status" value="1"/>
</dbReference>
<dbReference type="Gene3D" id="2.60.40.150">
    <property type="entry name" value="C2 domain"/>
    <property type="match status" value="2"/>
</dbReference>
<dbReference type="Gene3D" id="1.10.506.10">
    <property type="entry name" value="GTPase Activation - p120gap, domain 1"/>
    <property type="match status" value="1"/>
</dbReference>
<dbReference type="Gene3D" id="2.30.29.30">
    <property type="entry name" value="Pleckstrin-homology domain (PH domain)/Phosphotyrosine-binding domain (PTB)"/>
    <property type="match status" value="1"/>
</dbReference>
<dbReference type="InterPro" id="IPR000008">
    <property type="entry name" value="C2_dom"/>
</dbReference>
<dbReference type="InterPro" id="IPR035892">
    <property type="entry name" value="C2_domain_sf"/>
</dbReference>
<dbReference type="InterPro" id="IPR011993">
    <property type="entry name" value="PH-like_dom_sf"/>
</dbReference>
<dbReference type="InterPro" id="IPR001849">
    <property type="entry name" value="PH_domain"/>
</dbReference>
<dbReference type="InterPro" id="IPR039360">
    <property type="entry name" value="Ras_GTPase"/>
</dbReference>
<dbReference type="InterPro" id="IPR037776">
    <property type="entry name" value="RASAL_RasGAP"/>
</dbReference>
<dbReference type="InterPro" id="IPR023152">
    <property type="entry name" value="RasGAP_CS"/>
</dbReference>
<dbReference type="InterPro" id="IPR001936">
    <property type="entry name" value="RasGAP_dom"/>
</dbReference>
<dbReference type="InterPro" id="IPR008936">
    <property type="entry name" value="Rho_GTPase_activation_prot"/>
</dbReference>
<dbReference type="InterPro" id="IPR001562">
    <property type="entry name" value="Znf_Btk_motif"/>
</dbReference>
<dbReference type="PANTHER" id="PTHR10194">
    <property type="entry name" value="RAS GTPASE-ACTIVATING PROTEINS"/>
    <property type="match status" value="1"/>
</dbReference>
<dbReference type="PANTHER" id="PTHR10194:SF3">
    <property type="entry name" value="RASGAP-ACTIVATING-LIKE PROTEIN 1"/>
    <property type="match status" value="1"/>
</dbReference>
<dbReference type="Pfam" id="PF00779">
    <property type="entry name" value="BTK"/>
    <property type="match status" value="1"/>
</dbReference>
<dbReference type="Pfam" id="PF00168">
    <property type="entry name" value="C2"/>
    <property type="match status" value="2"/>
</dbReference>
<dbReference type="Pfam" id="PF00169">
    <property type="entry name" value="PH"/>
    <property type="match status" value="1"/>
</dbReference>
<dbReference type="Pfam" id="PF00616">
    <property type="entry name" value="RasGAP"/>
    <property type="match status" value="1"/>
</dbReference>
<dbReference type="SMART" id="SM00107">
    <property type="entry name" value="BTK"/>
    <property type="match status" value="1"/>
</dbReference>
<dbReference type="SMART" id="SM00239">
    <property type="entry name" value="C2"/>
    <property type="match status" value="2"/>
</dbReference>
<dbReference type="SMART" id="SM00233">
    <property type="entry name" value="PH"/>
    <property type="match status" value="1"/>
</dbReference>
<dbReference type="SMART" id="SM00323">
    <property type="entry name" value="RasGAP"/>
    <property type="match status" value="1"/>
</dbReference>
<dbReference type="SUPFAM" id="SSF49562">
    <property type="entry name" value="C2 domain (Calcium/lipid-binding domain, CaLB)"/>
    <property type="match status" value="2"/>
</dbReference>
<dbReference type="SUPFAM" id="SSF48350">
    <property type="entry name" value="GTPase activation domain, GAP"/>
    <property type="match status" value="1"/>
</dbReference>
<dbReference type="SUPFAM" id="SSF50729">
    <property type="entry name" value="PH domain-like"/>
    <property type="match status" value="1"/>
</dbReference>
<dbReference type="PROSITE" id="PS50004">
    <property type="entry name" value="C2"/>
    <property type="match status" value="2"/>
</dbReference>
<dbReference type="PROSITE" id="PS50003">
    <property type="entry name" value="PH_DOMAIN"/>
    <property type="match status" value="1"/>
</dbReference>
<dbReference type="PROSITE" id="PS00509">
    <property type="entry name" value="RAS_GTPASE_ACTIV_1"/>
    <property type="match status" value="1"/>
</dbReference>
<dbReference type="PROSITE" id="PS50018">
    <property type="entry name" value="RAS_GTPASE_ACTIV_2"/>
    <property type="match status" value="1"/>
</dbReference>
<dbReference type="PROSITE" id="PS51113">
    <property type="entry name" value="ZF_BTK"/>
    <property type="match status" value="1"/>
</dbReference>
<keyword id="KW-0106">Calcium</keyword>
<keyword id="KW-0221">Differentiation</keyword>
<keyword id="KW-0343">GTPase activation</keyword>
<keyword id="KW-0479">Metal-binding</keyword>
<keyword id="KW-0597">Phosphoprotein</keyword>
<keyword id="KW-1185">Reference proteome</keyword>
<keyword id="KW-0677">Repeat</keyword>
<keyword id="KW-0862">Zinc</keyword>
<keyword id="KW-0863">Zinc-finger</keyword>
<reference key="1">
    <citation type="journal article" date="1998" name="Gene">
        <title>Restricted tissue expression pattern of a novel human rasGAP-related gene and its murine ortholog.</title>
        <authorList>
            <person name="Allen M."/>
            <person name="Chu S."/>
            <person name="Brill S."/>
            <person name="Stotler C."/>
            <person name="Buckler A."/>
        </authorList>
    </citation>
    <scope>NUCLEOTIDE SEQUENCE [MRNA]</scope>
</reference>
<reference key="2">
    <citation type="journal article" date="2004" name="Genome Res.">
        <title>The status, quality, and expansion of the NIH full-length cDNA project: the Mammalian Gene Collection (MGC).</title>
        <authorList>
            <consortium name="The MGC Project Team"/>
        </authorList>
    </citation>
    <scope>NUCLEOTIDE SEQUENCE [LARGE SCALE MRNA]</scope>
    <source>
        <tissue>Mammary tumor</tissue>
    </source>
</reference>
<reference key="3">
    <citation type="submission" date="2005-09" db="EMBL/GenBank/DDBJ databases">
        <authorList>
            <person name="Mural R.J."/>
            <person name="Adams M.D."/>
            <person name="Myers E.W."/>
            <person name="Smith H.O."/>
            <person name="Venter J.C."/>
        </authorList>
    </citation>
    <scope>NUCLEOTIDE SEQUENCE [LARGE SCALE GENOMIC DNA]</scope>
</reference>
<reference key="4">
    <citation type="journal article" date="2010" name="Cell">
        <title>A tissue-specific atlas of mouse protein phosphorylation and expression.</title>
        <authorList>
            <person name="Huttlin E.L."/>
            <person name="Jedrychowski M.P."/>
            <person name="Elias J.E."/>
            <person name="Goswami T."/>
            <person name="Rad R."/>
            <person name="Beausoleil S.A."/>
            <person name="Villen J."/>
            <person name="Haas W."/>
            <person name="Sowa M.E."/>
            <person name="Gygi S.P."/>
        </authorList>
    </citation>
    <scope>PHOSPHORYLATION [LARGE SCALE ANALYSIS] AT THR-400</scope>
    <scope>IDENTIFICATION BY MASS SPECTROMETRY [LARGE SCALE ANALYSIS]</scope>
    <source>
        <tissue>Brain</tissue>
    </source>
</reference>
<accession>Q9Z268</accession>
<accession>Q99K69</accession>
<proteinExistence type="evidence at protein level"/>
<name>RASL1_MOUSE</name>
<comment type="function">
    <text evidence="1">Probable inhibitory regulator of the Ras-cyclic AMP pathway. Plays a role in dendrite formation by melanocytes.</text>
</comment>
<comment type="cofactor">
    <cofactor evidence="2">
        <name>Ca(2+)</name>
        <dbReference type="ChEBI" id="CHEBI:29108"/>
    </cofactor>
</comment>
<sequence length="799" mass="89395">MAKSGSLSIRVVEGRALPAKDVSGSSDPYCLVKVDDQVVARTATIWRSLSPFWGEEYTVHLPLDFHHLAFYVLDEDTVGHDDIIGKISLSKEAITADPRGIDSWINLSRVDPDAEVQGEVCLDVKLLEDARGRCLRCHVRQARDLAPRDISGTSDPFARVFWGNHSLETSTIKKTRFPHWDEVLELREAPGTTSPLRVELWDWDMVGKNDFLGMVEFTPQTLQQKPPNGWFRLLPFPRAEDSGGSLGALRLKVRLTEDRVLPSQYYQPLMELLLESVQGPAEEDTTSPLALLEELASGDCRQDLATKLVKLFLGRGLAGPFLDYLTRREVARTNDPNTLFRSNSLASKSMEQFMKLVGMRYLHEVLRPVISRVFEEKKYMELDPCKMDLNRSRRISFKGTPTEEQVRETSLGLLTGYLGSVVDAIVSSTGRCPLALRLAFKQLQRCVEKRFSGIEHQDVKYLAISGFLFLRFFAPAILTPKLFDLRDQHADPQTSRSLLLLAKAVQSIGNLGQQLGQGKEQWLAPLHPFLLQSISRVRDFLDQLVDVDEDEEAGGPACALVQPSTIVREGFLLKRKEEPGGLATRFAFKKRYFRLSGRDLSYSKTPEWQVHTSIPLSCIRAVEHVDEGAFQLPHVMQVVTQDGAGTSHTTYLQCKNVNDLNQWLSALRKASAPNPGKLVACHPGAFRSGRWTCCLQAERSAAGCSRTHSAITLGDWSDPLDPDAEAQAVYRQLLLGRDQLRLKLLEDSSLDTEVDPGRDSSATDGPCAEVLAQQRAATTHLLQVLEDLEQAHEEFQKRG</sequence>